<dbReference type="EMBL" id="BA000028">
    <property type="protein sequence ID" value="BAC12138.1"/>
    <property type="molecule type" value="Genomic_DNA"/>
</dbReference>
<dbReference type="RefSeq" id="WP_011064583.1">
    <property type="nucleotide sequence ID" value="NC_004193.1"/>
</dbReference>
<dbReference type="SMR" id="Q8ETS4"/>
<dbReference type="STRING" id="221109.gene:10732372"/>
<dbReference type="KEGG" id="oih:OB0182"/>
<dbReference type="eggNOG" id="ENOG5032ZH6">
    <property type="taxonomic scope" value="Bacteria"/>
</dbReference>
<dbReference type="HOGENOM" id="CLU_178266_0_0_9"/>
<dbReference type="OrthoDB" id="1799076at2"/>
<dbReference type="Proteomes" id="UP000000822">
    <property type="component" value="Chromosome"/>
</dbReference>
<dbReference type="GO" id="GO:0030436">
    <property type="term" value="P:asexual sporulation"/>
    <property type="evidence" value="ECO:0007669"/>
    <property type="project" value="UniProtKB-UniRule"/>
</dbReference>
<dbReference type="GO" id="GO:0030435">
    <property type="term" value="P:sporulation resulting in formation of a cellular spore"/>
    <property type="evidence" value="ECO:0007669"/>
    <property type="project" value="UniProtKB-KW"/>
</dbReference>
<dbReference type="HAMAP" id="MF_01506">
    <property type="entry name" value="Tlp"/>
    <property type="match status" value="1"/>
</dbReference>
<dbReference type="InterPro" id="IPR017524">
    <property type="entry name" value="SASP_thioredoxin-like"/>
</dbReference>
<dbReference type="NCBIfam" id="TIGR03090">
    <property type="entry name" value="SASP_tlp"/>
    <property type="match status" value="1"/>
</dbReference>
<dbReference type="Pfam" id="PF19824">
    <property type="entry name" value="Tlp"/>
    <property type="match status" value="1"/>
</dbReference>
<gene>
    <name evidence="1" type="primary">tlp</name>
    <name type="ordered locus">OB0182</name>
</gene>
<feature type="chain" id="PRO_0000221505" description="Small, acid-soluble spore protein Tlp">
    <location>
        <begin position="1"/>
        <end position="74"/>
    </location>
</feature>
<feature type="region of interest" description="Disordered" evidence="2">
    <location>
        <begin position="38"/>
        <end position="74"/>
    </location>
</feature>
<accession>Q8ETS4</accession>
<organism>
    <name type="scientific">Oceanobacillus iheyensis (strain DSM 14371 / CIP 107618 / JCM 11309 / KCTC 3954 / HTE831)</name>
    <dbReference type="NCBI Taxonomy" id="221109"/>
    <lineage>
        <taxon>Bacteria</taxon>
        <taxon>Bacillati</taxon>
        <taxon>Bacillota</taxon>
        <taxon>Bacilli</taxon>
        <taxon>Bacillales</taxon>
        <taxon>Bacillaceae</taxon>
        <taxon>Oceanobacillus</taxon>
    </lineage>
</organism>
<comment type="subcellular location">
    <subcellularLocation>
        <location evidence="1">Spore core</location>
    </subcellularLocation>
</comment>
<comment type="induction">
    <text evidence="1">Expressed only in the forespore compartment of sporulating cells.</text>
</comment>
<comment type="similarity">
    <text evidence="1">Belongs to the Tlp family.</text>
</comment>
<reference key="1">
    <citation type="journal article" date="2002" name="Nucleic Acids Res.">
        <title>Genome sequence of Oceanobacillus iheyensis isolated from the Iheya Ridge and its unexpected adaptive capabilities to extreme environments.</title>
        <authorList>
            <person name="Takami H."/>
            <person name="Takaki Y."/>
            <person name="Uchiyama I."/>
        </authorList>
    </citation>
    <scope>NUCLEOTIDE SEQUENCE [LARGE SCALE GENOMIC DNA]</scope>
    <source>
        <strain>DSM 14371 / CIP 107618 / JCM 11309 / KCTC 3954 / HTE831</strain>
    </source>
</reference>
<name>TLP_OCEIH</name>
<evidence type="ECO:0000255" key="1">
    <source>
        <dbReference type="HAMAP-Rule" id="MF_01506"/>
    </source>
</evidence>
<evidence type="ECO:0000256" key="2">
    <source>
        <dbReference type="SAM" id="MobiDB-lite"/>
    </source>
</evidence>
<protein>
    <recommendedName>
        <fullName evidence="1">Small, acid-soluble spore protein Tlp</fullName>
    </recommendedName>
</protein>
<keyword id="KW-1185">Reference proteome</keyword>
<keyword id="KW-0749">Sporulation</keyword>
<sequence length="74" mass="8539">MTHPKPDDRSDNVEKIQNTIDHTLENLNESKDYINAHAEELSSKEKDELSSKNERRKESVDGLRSEIKDEADSQ</sequence>
<proteinExistence type="inferred from homology"/>